<organism>
    <name type="scientific">Bacillus subtilis (strain 168)</name>
    <dbReference type="NCBI Taxonomy" id="224308"/>
    <lineage>
        <taxon>Bacteria</taxon>
        <taxon>Bacillati</taxon>
        <taxon>Bacillota</taxon>
        <taxon>Bacilli</taxon>
        <taxon>Bacillales</taxon>
        <taxon>Bacillaceae</taxon>
        <taxon>Bacillus</taxon>
    </lineage>
</organism>
<name>CTSR_BACSU</name>
<sequence length="154" mass="17744">MGHNISDIIEQYLKRVLDQNGKEILEIKRSEIADKFQCVPSQINYVINTRFTSERGYIVESKRGGGGYIRIIKIKMNNEVVLINNIISQINTHLSQAASDDIILRLLEDKVISEREAKMMVSVMDRSVLHIDLPERDELRARMMKAMLTSLKLK</sequence>
<feature type="chain" id="PRO_0000079499" description="Transcriptional regulator CtsR">
    <location>
        <begin position="1"/>
        <end position="154"/>
    </location>
</feature>
<feature type="modified residue" description="Phosphoarginine" evidence="4">
    <location>
        <position position="15"/>
    </location>
</feature>
<feature type="modified residue" description="Phosphoarginine" evidence="5">
    <location>
        <position position="55"/>
    </location>
</feature>
<feature type="mutagenesis site" description="Loss of DNA-binding capacity." evidence="2">
    <original>E</original>
    <variation>K</variation>
    <location>
        <position position="10"/>
    </location>
</feature>
<feature type="mutagenesis site" description="Prevents inactivation of CtsR at high temperature." evidence="2">
    <original>V</original>
    <variation>M</variation>
    <location>
        <position position="16"/>
    </location>
</feature>
<feature type="mutagenesis site" description="Loss of DNA-binding capacity." evidence="2">
    <original>C</original>
    <variation>Y</variation>
    <location>
        <position position="38"/>
    </location>
</feature>
<feature type="mutagenesis site" description="Loss of DNA-binding capacity." evidence="2">
    <original>S</original>
    <variation>F</variation>
    <location>
        <position position="41"/>
    </location>
</feature>
<feature type="mutagenesis site" description="Prevents inactivation of CtsR at high temperature." evidence="2">
    <original>G</original>
    <variation>S</variation>
    <location>
        <position position="65"/>
    </location>
</feature>
<comment type="function">
    <text evidence="6">Controls the expression of the cellular protein quality control genes clpC, clpE and clpP, as well as mcsA and mcsB. Acts as a repressor of these class III stress genes by binding to a directly repeated heptanucleotide operator sequence (A/GGTCAAA NAN A/GGTCAAA). After heat shock, CtsR is degraded by the ClpCP and ClpEP proteolytic systems, ensuring the derepression of clpE, clpP and the clpC operon. CtsR negatively autoregulates its own synthesis.</text>
</comment>
<comment type="activity regulation">
    <text evidence="1">Repressor activity is controlled via phosphorylation on arginine residues. Unphosphorylated CtsR binds with high affinity to its DNA consensus site and inhibits transcription of downstream genes, whereas the McsB-phosphorylated CtsR repressor is not able to bind to DNA, thus allowing heat-shock gene expression (By similarity).</text>
</comment>
<comment type="subunit">
    <text evidence="2">Homodimer.</text>
</comment>
<comment type="induction">
    <text evidence="3">CtsR autoinduces its own synthesis by derepression of the clpC operon after heat shock.</text>
</comment>
<comment type="PTM">
    <text evidence="4 5">Is degraded by ClpXP at 37 degrees Celsius, which maintains a basal level of the regulator within the cell. Is phosphorylated on Arg residues by McsB.</text>
</comment>
<comment type="similarity">
    <text evidence="7">Belongs to the CtsR family.</text>
</comment>
<protein>
    <recommendedName>
        <fullName>Transcriptional regulator CtsR</fullName>
    </recommendedName>
    <alternativeName>
        <fullName>Class three stress gene repressor</fullName>
    </alternativeName>
</protein>
<proteinExistence type="evidence at protein level"/>
<dbReference type="EMBL" id="D26185">
    <property type="protein sequence ID" value="BAA05317.1"/>
    <property type="molecule type" value="Genomic_DNA"/>
</dbReference>
<dbReference type="EMBL" id="AL009126">
    <property type="protein sequence ID" value="CAB11859.1"/>
    <property type="molecule type" value="Genomic_DNA"/>
</dbReference>
<dbReference type="PIR" id="S66112">
    <property type="entry name" value="S66112"/>
</dbReference>
<dbReference type="RefSeq" id="NP_387964.1">
    <property type="nucleotide sequence ID" value="NC_000964.3"/>
</dbReference>
<dbReference type="RefSeq" id="WP_003225724.1">
    <property type="nucleotide sequence ID" value="NZ_OZ025638.1"/>
</dbReference>
<dbReference type="SMR" id="P37568"/>
<dbReference type="FunCoup" id="P37568">
    <property type="interactions" value="58"/>
</dbReference>
<dbReference type="IntAct" id="P37568">
    <property type="interactions" value="5"/>
</dbReference>
<dbReference type="STRING" id="224308.BSU00830"/>
<dbReference type="iPTMnet" id="P37568"/>
<dbReference type="PaxDb" id="224308-BSU00830"/>
<dbReference type="EnsemblBacteria" id="CAB11859">
    <property type="protein sequence ID" value="CAB11859"/>
    <property type="gene ID" value="BSU_00830"/>
</dbReference>
<dbReference type="GeneID" id="936883"/>
<dbReference type="KEGG" id="bsu:BSU00830"/>
<dbReference type="PATRIC" id="fig|224308.179.peg.84"/>
<dbReference type="eggNOG" id="COG4463">
    <property type="taxonomic scope" value="Bacteria"/>
</dbReference>
<dbReference type="InParanoid" id="P37568"/>
<dbReference type="OrthoDB" id="1680813at2"/>
<dbReference type="PhylomeDB" id="P37568"/>
<dbReference type="BioCyc" id="BSUB:BSU00830-MONOMER"/>
<dbReference type="Proteomes" id="UP000001570">
    <property type="component" value="Chromosome"/>
</dbReference>
<dbReference type="GO" id="GO:0003677">
    <property type="term" value="F:DNA binding"/>
    <property type="evidence" value="ECO:0007669"/>
    <property type="project" value="UniProtKB-KW"/>
</dbReference>
<dbReference type="GO" id="GO:0006355">
    <property type="term" value="P:regulation of DNA-templated transcription"/>
    <property type="evidence" value="ECO:0007669"/>
    <property type="project" value="InterPro"/>
</dbReference>
<dbReference type="FunFam" id="3.30.56.130:FF:000001">
    <property type="entry name" value="Transcriptional regulator CtsR"/>
    <property type="match status" value="1"/>
</dbReference>
<dbReference type="Gene3D" id="1.10.1200.150">
    <property type="entry name" value="Transcriptional regulator CtsR, C-terminal domain"/>
    <property type="match status" value="1"/>
</dbReference>
<dbReference type="Gene3D" id="3.30.56.130">
    <property type="entry name" value="Transcriptional regulator CtsR, winged HTH domain"/>
    <property type="match status" value="1"/>
</dbReference>
<dbReference type="InterPro" id="IPR008463">
    <property type="entry name" value="CtsR"/>
</dbReference>
<dbReference type="InterPro" id="IPR041473">
    <property type="entry name" value="CtsR_C"/>
</dbReference>
<dbReference type="InterPro" id="IPR041908">
    <property type="entry name" value="CtsR_C_sf"/>
</dbReference>
<dbReference type="InterPro" id="IPR040465">
    <property type="entry name" value="CtsR_N"/>
</dbReference>
<dbReference type="InterPro" id="IPR041902">
    <property type="entry name" value="CtsR_N_sf"/>
</dbReference>
<dbReference type="Pfam" id="PF05848">
    <property type="entry name" value="CtsR"/>
    <property type="match status" value="1"/>
</dbReference>
<dbReference type="Pfam" id="PF17727">
    <property type="entry name" value="CtsR_C"/>
    <property type="match status" value="1"/>
</dbReference>
<dbReference type="PIRSF" id="PIRSF010607">
    <property type="entry name" value="Txn_repr_CtsR"/>
    <property type="match status" value="1"/>
</dbReference>
<gene>
    <name type="primary">ctsR</name>
    <name type="synonym">yacG</name>
    <name type="ordered locus">BSU00830</name>
</gene>
<keyword id="KW-0238">DNA-binding</keyword>
<keyword id="KW-0597">Phosphoprotein</keyword>
<keyword id="KW-1185">Reference proteome</keyword>
<keyword id="KW-0678">Repressor</keyword>
<keyword id="KW-0346">Stress response</keyword>
<keyword id="KW-0804">Transcription</keyword>
<keyword id="KW-0805">Transcription regulation</keyword>
<reference key="1">
    <citation type="journal article" date="1994" name="DNA Res.">
        <title>Systematic sequencing of the 180 kilobase region of the Bacillus subtilis chromosome containing the replication origin.</title>
        <authorList>
            <person name="Ogasawara N."/>
            <person name="Nakai S."/>
            <person name="Yoshikawa H."/>
        </authorList>
    </citation>
    <scope>NUCLEOTIDE SEQUENCE [GENOMIC DNA]</scope>
    <source>
        <strain>168</strain>
    </source>
</reference>
<reference key="2">
    <citation type="journal article" date="1997" name="Nature">
        <title>The complete genome sequence of the Gram-positive bacterium Bacillus subtilis.</title>
        <authorList>
            <person name="Kunst F."/>
            <person name="Ogasawara N."/>
            <person name="Moszer I."/>
            <person name="Albertini A.M."/>
            <person name="Alloni G."/>
            <person name="Azevedo V."/>
            <person name="Bertero M.G."/>
            <person name="Bessieres P."/>
            <person name="Bolotin A."/>
            <person name="Borchert S."/>
            <person name="Borriss R."/>
            <person name="Boursier L."/>
            <person name="Brans A."/>
            <person name="Braun M."/>
            <person name="Brignell S.C."/>
            <person name="Bron S."/>
            <person name="Brouillet S."/>
            <person name="Bruschi C.V."/>
            <person name="Caldwell B."/>
            <person name="Capuano V."/>
            <person name="Carter N.M."/>
            <person name="Choi S.-K."/>
            <person name="Codani J.-J."/>
            <person name="Connerton I.F."/>
            <person name="Cummings N.J."/>
            <person name="Daniel R.A."/>
            <person name="Denizot F."/>
            <person name="Devine K.M."/>
            <person name="Duesterhoeft A."/>
            <person name="Ehrlich S.D."/>
            <person name="Emmerson P.T."/>
            <person name="Entian K.-D."/>
            <person name="Errington J."/>
            <person name="Fabret C."/>
            <person name="Ferrari E."/>
            <person name="Foulger D."/>
            <person name="Fritz C."/>
            <person name="Fujita M."/>
            <person name="Fujita Y."/>
            <person name="Fuma S."/>
            <person name="Galizzi A."/>
            <person name="Galleron N."/>
            <person name="Ghim S.-Y."/>
            <person name="Glaser P."/>
            <person name="Goffeau A."/>
            <person name="Golightly E.J."/>
            <person name="Grandi G."/>
            <person name="Guiseppi G."/>
            <person name="Guy B.J."/>
            <person name="Haga K."/>
            <person name="Haiech J."/>
            <person name="Harwood C.R."/>
            <person name="Henaut A."/>
            <person name="Hilbert H."/>
            <person name="Holsappel S."/>
            <person name="Hosono S."/>
            <person name="Hullo M.-F."/>
            <person name="Itaya M."/>
            <person name="Jones L.-M."/>
            <person name="Joris B."/>
            <person name="Karamata D."/>
            <person name="Kasahara Y."/>
            <person name="Klaerr-Blanchard M."/>
            <person name="Klein C."/>
            <person name="Kobayashi Y."/>
            <person name="Koetter P."/>
            <person name="Koningstein G."/>
            <person name="Krogh S."/>
            <person name="Kumano M."/>
            <person name="Kurita K."/>
            <person name="Lapidus A."/>
            <person name="Lardinois S."/>
            <person name="Lauber J."/>
            <person name="Lazarevic V."/>
            <person name="Lee S.-M."/>
            <person name="Levine A."/>
            <person name="Liu H."/>
            <person name="Masuda S."/>
            <person name="Mauel C."/>
            <person name="Medigue C."/>
            <person name="Medina N."/>
            <person name="Mellado R.P."/>
            <person name="Mizuno M."/>
            <person name="Moestl D."/>
            <person name="Nakai S."/>
            <person name="Noback M."/>
            <person name="Noone D."/>
            <person name="O'Reilly M."/>
            <person name="Ogawa K."/>
            <person name="Ogiwara A."/>
            <person name="Oudega B."/>
            <person name="Park S.-H."/>
            <person name="Parro V."/>
            <person name="Pohl T.M."/>
            <person name="Portetelle D."/>
            <person name="Porwollik S."/>
            <person name="Prescott A.M."/>
            <person name="Presecan E."/>
            <person name="Pujic P."/>
            <person name="Purnelle B."/>
            <person name="Rapoport G."/>
            <person name="Rey M."/>
            <person name="Reynolds S."/>
            <person name="Rieger M."/>
            <person name="Rivolta C."/>
            <person name="Rocha E."/>
            <person name="Roche B."/>
            <person name="Rose M."/>
            <person name="Sadaie Y."/>
            <person name="Sato T."/>
            <person name="Scanlan E."/>
            <person name="Schleich S."/>
            <person name="Schroeter R."/>
            <person name="Scoffone F."/>
            <person name="Sekiguchi J."/>
            <person name="Sekowska A."/>
            <person name="Seror S.J."/>
            <person name="Serror P."/>
            <person name="Shin B.-S."/>
            <person name="Soldo B."/>
            <person name="Sorokin A."/>
            <person name="Tacconi E."/>
            <person name="Takagi T."/>
            <person name="Takahashi H."/>
            <person name="Takemaru K."/>
            <person name="Takeuchi M."/>
            <person name="Tamakoshi A."/>
            <person name="Tanaka T."/>
            <person name="Terpstra P."/>
            <person name="Tognoni A."/>
            <person name="Tosato V."/>
            <person name="Uchiyama S."/>
            <person name="Vandenbol M."/>
            <person name="Vannier F."/>
            <person name="Vassarotti A."/>
            <person name="Viari A."/>
            <person name="Wambutt R."/>
            <person name="Wedler E."/>
            <person name="Wedler H."/>
            <person name="Weitzenegger T."/>
            <person name="Winters P."/>
            <person name="Wipat A."/>
            <person name="Yamamoto H."/>
            <person name="Yamane K."/>
            <person name="Yasumoto K."/>
            <person name="Yata K."/>
            <person name="Yoshida K."/>
            <person name="Yoshikawa H.-F."/>
            <person name="Zumstein E."/>
            <person name="Yoshikawa H."/>
            <person name="Danchin A."/>
        </authorList>
    </citation>
    <scope>NUCLEOTIDE SEQUENCE [LARGE SCALE GENOMIC DNA]</scope>
    <source>
        <strain>168</strain>
    </source>
</reference>
<reference key="3">
    <citation type="journal article" date="1999" name="Mol. Microbiol.">
        <title>CtsR, a novel regulator of stress and heat shock response, controls clp and molecular chaperone gene expression in gram-positive bacteria.</title>
        <authorList>
            <person name="Derre I."/>
            <person name="Rapoport G."/>
            <person name="Msadek T."/>
        </authorList>
    </citation>
    <scope>FUNCTION AS A REPRESSOR</scope>
</reference>
<reference key="4">
    <citation type="journal article" date="2000" name="Mol. Microbiol.">
        <title>The CtsR regulator of stress response is active as a dimer and specifically degraded in vivo at 37 degrees C.</title>
        <authorList>
            <person name="Derre I."/>
            <person name="Rapoport G."/>
            <person name="Msadek T."/>
        </authorList>
    </citation>
    <scope>SUBUNIT</scope>
    <scope>DOMAIN</scope>
    <scope>MUTAGENESIS OF GLU-10; VAL-16; CYS-38; SER-41 AND GLY-65</scope>
    <source>
        <strain>168</strain>
    </source>
</reference>
<reference key="5">
    <citation type="journal article" date="2006" name="J. Bacteriol.">
        <title>Involvement of Bacillus subtilis ClpE in CtsR degradation and protein quality control.</title>
        <authorList>
            <person name="Miethke M."/>
            <person name="Hecker M."/>
            <person name="Gerth U."/>
        </authorList>
    </citation>
    <scope>DEGRADATION BY CLPCP AND CLPEP</scope>
    <scope>INDUCTION</scope>
    <source>
        <strain>168</strain>
    </source>
</reference>
<reference key="6">
    <citation type="journal article" date="2012" name="Proc. Natl. Acad. Sci. U.S.A.">
        <title>Global impact of protein arginine phosphorylation on the physiology of Bacillus subtilis.</title>
        <authorList>
            <person name="Elsholz A.K."/>
            <person name="Turgay K."/>
            <person name="Michalik S."/>
            <person name="Hessling B."/>
            <person name="Gronau K."/>
            <person name="Oertel D."/>
            <person name="Mader U."/>
            <person name="Bernhardt J."/>
            <person name="Becher D."/>
            <person name="Hecker M."/>
            <person name="Gerth U."/>
        </authorList>
    </citation>
    <scope>IDENTIFICATION BY MASS SPECTROMETRY</scope>
    <scope>PHOSPHORYLATION AT ARG-15</scope>
    <source>
        <strain>168</strain>
    </source>
</reference>
<reference key="7">
    <citation type="journal article" date="2014" name="Mol. Cell. Proteomics">
        <title>Quantitative phosphoproteomics reveals the role of protein arginine phosphorylation in the bacterial stress response.</title>
        <authorList>
            <person name="Schmidt A."/>
            <person name="Trentini D.B."/>
            <person name="Spiess S."/>
            <person name="Fuhrmann J."/>
            <person name="Ammerer G."/>
            <person name="Mechtler K."/>
            <person name="Clausen T."/>
        </authorList>
    </citation>
    <scope>IDENTIFICATION BY MASS SPECTROMETRY</scope>
    <scope>PHOSPHORYLATION AT ARG-55</scope>
    <source>
        <strain>168</strain>
    </source>
</reference>
<accession>P37568</accession>
<evidence type="ECO:0000250" key="1"/>
<evidence type="ECO:0000269" key="2">
    <source>
    </source>
</evidence>
<evidence type="ECO:0000269" key="3">
    <source>
    </source>
</evidence>
<evidence type="ECO:0000269" key="4">
    <source>
    </source>
</evidence>
<evidence type="ECO:0000269" key="5">
    <source>
    </source>
</evidence>
<evidence type="ECO:0000269" key="6">
    <source>
    </source>
</evidence>
<evidence type="ECO:0000305" key="7"/>